<reference key="1">
    <citation type="journal article" date="1988" name="J. Biol. Chem.">
        <title>Isolation and sequencing of a cDNA encoding the decarboxylase (E1)alpha precursor of bovine branched-chain alpha-keto acid dehydrogenase complex. Expression of E1 alpha mRNA and subunit in maple-syrup-urine-disease and 3T3-L1 cells.</title>
        <authorList>
            <person name="Hu C.-W.C."/>
            <person name="Lau K.S."/>
            <person name="Griffin T.A."/>
            <person name="Chuang J.L."/>
            <person name="Fisher C.W."/>
            <person name="Cox R.P."/>
            <person name="Chuang D.T."/>
        </authorList>
    </citation>
    <scope>NUCLEOTIDE SEQUENCE [MRNA]</scope>
</reference>
<reference key="2">
    <citation type="journal article" date="1978" name="Proc. Natl. Acad. Sci. U.S.A.">
        <title>Purification and characterization of branched chain alpha-keto acid dehydrogenase complex of bovine kidney.</title>
        <authorList>
            <person name="Pettit F.H."/>
            <person name="Yeaman S.J."/>
            <person name="Reed L.J."/>
        </authorList>
    </citation>
    <scope>FUNCTION</scope>
    <scope>SUBCELLULAR LOCATION</scope>
    <scope>TISSUE SPECIFICITY</scope>
</reference>
<name>ODBA_BOVIN</name>
<protein>
    <recommendedName>
        <fullName evidence="1">2-oxoisovalerate dehydrogenase subunit alpha, mitochondrial</fullName>
        <ecNumber evidence="1">1.2.4.4</ecNumber>
    </recommendedName>
    <alternativeName>
        <fullName>Branched-chain alpha-keto acid dehydrogenase E1 component alpha chain</fullName>
        <shortName>BCKDE1A</shortName>
        <shortName>BCKDH E1-alpha</shortName>
    </alternativeName>
</protein>
<proteinExistence type="evidence at protein level"/>
<keyword id="KW-0007">Acetylation</keyword>
<keyword id="KW-0460">Magnesium</keyword>
<keyword id="KW-0479">Metal-binding</keyword>
<keyword id="KW-0496">Mitochondrion</keyword>
<keyword id="KW-0560">Oxidoreductase</keyword>
<keyword id="KW-0597">Phosphoprotein</keyword>
<keyword id="KW-0630">Potassium</keyword>
<keyword id="KW-1185">Reference proteome</keyword>
<keyword id="KW-0786">Thiamine pyrophosphate</keyword>
<keyword id="KW-0809">Transit peptide</keyword>
<accession>P11178</accession>
<organism>
    <name type="scientific">Bos taurus</name>
    <name type="common">Bovine</name>
    <dbReference type="NCBI Taxonomy" id="9913"/>
    <lineage>
        <taxon>Eukaryota</taxon>
        <taxon>Metazoa</taxon>
        <taxon>Chordata</taxon>
        <taxon>Craniata</taxon>
        <taxon>Vertebrata</taxon>
        <taxon>Euteleostomi</taxon>
        <taxon>Mammalia</taxon>
        <taxon>Eutheria</taxon>
        <taxon>Laurasiatheria</taxon>
        <taxon>Artiodactyla</taxon>
        <taxon>Ruminantia</taxon>
        <taxon>Pecora</taxon>
        <taxon>Bovidae</taxon>
        <taxon>Bovinae</taxon>
        <taxon>Bos</taxon>
    </lineage>
</organism>
<feature type="transit peptide" description="Mitochondrion">
    <location>
        <begin position="1"/>
        <end position="55"/>
    </location>
</feature>
<feature type="chain" id="PRO_0000020464" description="2-oxoisovalerate dehydrogenase subunit alpha, mitochondrial">
    <location>
        <begin position="56"/>
        <end position="455"/>
    </location>
</feature>
<feature type="binding site" evidence="1">
    <location>
        <position position="168"/>
    </location>
    <ligand>
        <name>thiamine diphosphate</name>
        <dbReference type="ChEBI" id="CHEBI:58937"/>
        <note>ligand shared with beta subunit</note>
    </ligand>
</feature>
<feature type="binding site" evidence="1">
    <location>
        <position position="169"/>
    </location>
    <ligand>
        <name>thiamine diphosphate</name>
        <dbReference type="ChEBI" id="CHEBI:58937"/>
        <note>ligand shared with beta subunit</note>
    </ligand>
</feature>
<feature type="binding site" evidence="1">
    <location>
        <position position="216"/>
    </location>
    <ligand>
        <name>K(+)</name>
        <dbReference type="ChEBI" id="CHEBI:29103"/>
        <note>structural</note>
    </ligand>
</feature>
<feature type="binding site" evidence="1">
    <location>
        <position position="217"/>
    </location>
    <ligand>
        <name>thiamine diphosphate</name>
        <dbReference type="ChEBI" id="CHEBI:58937"/>
        <note>ligand shared with beta subunit</note>
    </ligand>
</feature>
<feature type="binding site" evidence="1">
    <location>
        <position position="218"/>
    </location>
    <ligand>
        <name>K(+)</name>
        <dbReference type="ChEBI" id="CHEBI:29103"/>
        <note>structural</note>
    </ligand>
</feature>
<feature type="binding site" evidence="1">
    <location>
        <position position="221"/>
    </location>
    <ligand>
        <name>K(+)</name>
        <dbReference type="ChEBI" id="CHEBI:29103"/>
        <note>structural</note>
    </ligand>
</feature>
<feature type="binding site" evidence="1">
    <location>
        <position position="222"/>
    </location>
    <ligand>
        <name>K(+)</name>
        <dbReference type="ChEBI" id="CHEBI:29103"/>
        <note>structural</note>
    </ligand>
</feature>
<feature type="binding site" evidence="1">
    <location>
        <position position="248"/>
    </location>
    <ligand>
        <name>Mg(2+)</name>
        <dbReference type="ChEBI" id="CHEBI:18420"/>
    </ligand>
</feature>
<feature type="binding site" evidence="1">
    <location>
        <position position="249"/>
    </location>
    <ligand>
        <name>thiamine diphosphate</name>
        <dbReference type="ChEBI" id="CHEBI:58937"/>
        <note>ligand shared with beta subunit</note>
    </ligand>
</feature>
<feature type="binding site" evidence="1">
    <location>
        <position position="250"/>
    </location>
    <ligand>
        <name>thiamine diphosphate</name>
        <dbReference type="ChEBI" id="CHEBI:58937"/>
        <note>ligand shared with beta subunit</note>
    </ligand>
</feature>
<feature type="binding site" evidence="1">
    <location>
        <position position="275"/>
    </location>
    <ligand>
        <name>thiamine diphosphate</name>
        <dbReference type="ChEBI" id="CHEBI:58937"/>
        <note>ligand shared with beta subunit</note>
    </ligand>
</feature>
<feature type="binding site" evidence="1">
    <location>
        <position position="277"/>
    </location>
    <ligand>
        <name>Mg(2+)</name>
        <dbReference type="ChEBI" id="CHEBI:18420"/>
    </ligand>
</feature>
<feature type="binding site" evidence="1">
    <location>
        <position position="279"/>
    </location>
    <ligand>
        <name>Mg(2+)</name>
        <dbReference type="ChEBI" id="CHEBI:18420"/>
    </ligand>
</feature>
<feature type="binding site" evidence="1">
    <location>
        <position position="346"/>
    </location>
    <ligand>
        <name>thiamine diphosphate</name>
        <dbReference type="ChEBI" id="CHEBI:58937"/>
        <note>ligand shared with beta subunit</note>
    </ligand>
</feature>
<feature type="modified residue" description="Phosphoserine; by BCKDK" evidence="1">
    <location>
        <position position="347"/>
    </location>
</feature>
<feature type="modified residue" description="Phosphothreonine" evidence="2">
    <location>
        <position position="348"/>
    </location>
</feature>
<feature type="modified residue" description="Phosphoserine" evidence="2">
    <location>
        <position position="349"/>
    </location>
</feature>
<feature type="modified residue" description="Phosphoserine" evidence="2">
    <location>
        <position position="357"/>
    </location>
</feature>
<feature type="modified residue" description="N6-acetyllysine; alternate" evidence="2">
    <location>
        <position position="366"/>
    </location>
</feature>
<feature type="modified residue" description="N6-succinyllysine; alternate" evidence="2">
    <location>
        <position position="366"/>
    </location>
</feature>
<feature type="modified residue" description="N6-succinyllysine" evidence="2">
    <location>
        <position position="390"/>
    </location>
</feature>
<evidence type="ECO:0000250" key="1">
    <source>
        <dbReference type="UniProtKB" id="P12694"/>
    </source>
</evidence>
<evidence type="ECO:0000250" key="2">
    <source>
        <dbReference type="UniProtKB" id="P50136"/>
    </source>
</evidence>
<evidence type="ECO:0000269" key="3">
    <source>
    </source>
</evidence>
<evidence type="ECO:0000305" key="4"/>
<sequence>MQGSAKMAMAVAVAVARVWRPSRGLGRTGLPLLRLLGARGLARFHPHRWQQQQHFSSLDDKPQFPGASAEFIDKLEFIQPNVISGIPIYRVMDRQGQIINPSEDPHLPQEKVLKFYKSMTLLNTMDRILYESQRQGRISFYMTNYGEEGTHVGSAAALDDTDLVFGQYREAGVLMYRDYPLELFMAQCYGNVSDLGKGRQMPVHYGCRERHFVTISSPLATQIPQAVGAAYAAKRANANRVVICYFGEGAASEGDAHAGFNFAATLECPIIFFCRNNGYAISTPTSEQYRGDGIAARGPGYGILSIRVDGNDVFAVYNATKEARRRAVAENQPFLIEAMTYRIGHHSTSDDSSAYRSVDEVNYWDKQDHPISRLRHHLQSRGWWDDEQEKAWRKQSRKKVMEAFEQAERKLKPNPSLIFSDVYQEMPAQLRKQQESLARHLQTYGEHYPLDHFEK</sequence>
<comment type="function">
    <text evidence="3">Together with BCKDHB forms the heterotetrameric E1 subunit of the mitochondrial branched-chain alpha-ketoacid dehydrogenase (BCKD) complex. The BCKD complex catalyzes the multi-step oxidative decarboxylation of alpha-ketoacids derived from the branched-chain amino-acids valine, leucine and isoleucine producing CO2 and acyl-CoA which is subsequently utilized to produce energy. The E1 subunit catalyzes the first step with the decarboxylation of the alpha-ketoacid forming an enzyme-product intermediate. A reductive acylation mediated by the lipoylamide cofactor of E2 extracts the acyl group from the E1 active site for the next step of the reaction.</text>
</comment>
<comment type="catalytic activity">
    <reaction evidence="1">
        <text>N(6)-[(R)-lipoyl]-L-lysyl-[protein] + 3-methyl-2-oxobutanoate + H(+) = N(6)-[(R)-S(8)-2-methylpropanoyldihydrolipoyl]-L-lysyl-[protein] + CO2</text>
        <dbReference type="Rhea" id="RHEA:13457"/>
        <dbReference type="Rhea" id="RHEA-COMP:10474"/>
        <dbReference type="Rhea" id="RHEA-COMP:10497"/>
        <dbReference type="ChEBI" id="CHEBI:11851"/>
        <dbReference type="ChEBI" id="CHEBI:15378"/>
        <dbReference type="ChEBI" id="CHEBI:16526"/>
        <dbReference type="ChEBI" id="CHEBI:83099"/>
        <dbReference type="ChEBI" id="CHEBI:83142"/>
        <dbReference type="EC" id="1.2.4.4"/>
    </reaction>
    <physiologicalReaction direction="left-to-right" evidence="1">
        <dbReference type="Rhea" id="RHEA:13458"/>
    </physiologicalReaction>
</comment>
<comment type="cofactor">
    <cofactor evidence="1">
        <name>thiamine diphosphate</name>
        <dbReference type="ChEBI" id="CHEBI:58937"/>
    </cofactor>
    <cofactor evidence="1">
        <name>Mg(2+)</name>
        <dbReference type="ChEBI" id="CHEBI:18420"/>
    </cofactor>
</comment>
<comment type="subunit">
    <text evidence="1">Heterotetramer of 2 alpha/BCKDHA and 2 beta chains/BCKDHB that forms the branched-chain alpha-keto acid decarboxylase (E1) component of the BCKD complex. The branched-chain alpha-ketoacid dehydrogenase is a large complex composed of three major building blocks E1, E2 and E3. It is organized around E2, a 24-meric cubic core composed of DBT, to which are associated 6 to 12 copies of E1, and approximately 6 copies of the dehydrogenase E3, a DLD dimer. Interacts with PPM1K.</text>
</comment>
<comment type="subcellular location">
    <subcellularLocation>
        <location evidence="3">Mitochondrion matrix</location>
    </subcellularLocation>
</comment>
<comment type="tissue specificity">
    <text evidence="3">Expressed in kidney (at protein level).</text>
</comment>
<comment type="PTM">
    <text evidence="1">Phosphorylated at Ser-347 by BCKDK and dephosphorylated by protein phosphatase PPM1K.</text>
</comment>
<comment type="similarity">
    <text evidence="4">Belongs to the BCKDHA family.</text>
</comment>
<dbReference type="EC" id="1.2.4.4" evidence="1"/>
<dbReference type="EMBL" id="J03759">
    <property type="protein sequence ID" value="AAA30595.1"/>
    <property type="molecule type" value="mRNA"/>
</dbReference>
<dbReference type="PIR" id="A28073">
    <property type="entry name" value="DEBOXA"/>
</dbReference>
<dbReference type="RefSeq" id="NP_776931.1">
    <property type="nucleotide sequence ID" value="NM_174506.1"/>
</dbReference>
<dbReference type="SMR" id="P11178"/>
<dbReference type="FunCoup" id="P11178">
    <property type="interactions" value="1057"/>
</dbReference>
<dbReference type="IntAct" id="P11178">
    <property type="interactions" value="1"/>
</dbReference>
<dbReference type="STRING" id="9913.ENSBTAP00000021342"/>
<dbReference type="PaxDb" id="9913-ENSBTAP00000021342"/>
<dbReference type="GeneID" id="282149"/>
<dbReference type="KEGG" id="bta:282149"/>
<dbReference type="CTD" id="593"/>
<dbReference type="eggNOG" id="KOG1182">
    <property type="taxonomic scope" value="Eukaryota"/>
</dbReference>
<dbReference type="InParanoid" id="P11178"/>
<dbReference type="OrthoDB" id="3845at2759"/>
<dbReference type="SABIO-RK" id="P11178"/>
<dbReference type="Proteomes" id="UP000009136">
    <property type="component" value="Unplaced"/>
</dbReference>
<dbReference type="GO" id="GO:0160157">
    <property type="term" value="C:branched-chain alpha-ketoacid dehydrogenase complex"/>
    <property type="evidence" value="ECO:0000250"/>
    <property type="project" value="UniProtKB"/>
</dbReference>
<dbReference type="GO" id="GO:0005759">
    <property type="term" value="C:mitochondrial matrix"/>
    <property type="evidence" value="ECO:0007669"/>
    <property type="project" value="UniProtKB-SubCell"/>
</dbReference>
<dbReference type="GO" id="GO:0003863">
    <property type="term" value="F:3-methyl-2-oxobutanoate dehydrogenase (2-methylpropanoyl-transferring) activity"/>
    <property type="evidence" value="ECO:0007669"/>
    <property type="project" value="UniProtKB-EC"/>
</dbReference>
<dbReference type="GO" id="GO:0046872">
    <property type="term" value="F:metal ion binding"/>
    <property type="evidence" value="ECO:0007669"/>
    <property type="project" value="UniProtKB-KW"/>
</dbReference>
<dbReference type="GO" id="GO:0009083">
    <property type="term" value="P:branched-chain amino acid catabolic process"/>
    <property type="evidence" value="ECO:0000250"/>
    <property type="project" value="UniProtKB"/>
</dbReference>
<dbReference type="CDD" id="cd02000">
    <property type="entry name" value="TPP_E1_PDC_ADC_BCADC"/>
    <property type="match status" value="1"/>
</dbReference>
<dbReference type="FunFam" id="3.40.50.970:FF:000015">
    <property type="entry name" value="2-oxoisovalerate dehydrogenase subunit alpha"/>
    <property type="match status" value="1"/>
</dbReference>
<dbReference type="Gene3D" id="3.40.50.970">
    <property type="match status" value="1"/>
</dbReference>
<dbReference type="InterPro" id="IPR050771">
    <property type="entry name" value="Alpha-ketoacid_DH_E1_comp"/>
</dbReference>
<dbReference type="InterPro" id="IPR001017">
    <property type="entry name" value="DH_E1"/>
</dbReference>
<dbReference type="InterPro" id="IPR029061">
    <property type="entry name" value="THDP-binding"/>
</dbReference>
<dbReference type="PANTHER" id="PTHR43380">
    <property type="entry name" value="2-OXOISOVALERATE DEHYDROGENASE SUBUNIT ALPHA, MITOCHONDRIAL"/>
    <property type="match status" value="1"/>
</dbReference>
<dbReference type="PANTHER" id="PTHR43380:SF1">
    <property type="entry name" value="2-OXOISOVALERATE DEHYDROGENASE SUBUNIT ALPHA, MITOCHONDRIAL"/>
    <property type="match status" value="1"/>
</dbReference>
<dbReference type="Pfam" id="PF00676">
    <property type="entry name" value="E1_dh"/>
    <property type="match status" value="1"/>
</dbReference>
<dbReference type="SUPFAM" id="SSF52518">
    <property type="entry name" value="Thiamin diphosphate-binding fold (THDP-binding)"/>
    <property type="match status" value="1"/>
</dbReference>
<gene>
    <name type="primary">BCKDHA</name>
</gene>